<reference key="1">
    <citation type="journal article" date="1997" name="Science">
        <title>The complete genome sequence of Escherichia coli K-12.</title>
        <authorList>
            <person name="Blattner F.R."/>
            <person name="Plunkett G. III"/>
            <person name="Bloch C.A."/>
            <person name="Perna N.T."/>
            <person name="Burland V."/>
            <person name="Riley M."/>
            <person name="Collado-Vides J."/>
            <person name="Glasner J.D."/>
            <person name="Rode C.K."/>
            <person name="Mayhew G.F."/>
            <person name="Gregor J."/>
            <person name="Davis N.W."/>
            <person name="Kirkpatrick H.A."/>
            <person name="Goeden M.A."/>
            <person name="Rose D.J."/>
            <person name="Mau B."/>
            <person name="Shao Y."/>
        </authorList>
    </citation>
    <scope>NUCLEOTIDE SEQUENCE [LARGE SCALE GENOMIC DNA]</scope>
    <source>
        <strain>K12 / MG1655 / ATCC 47076</strain>
    </source>
</reference>
<reference key="2">
    <citation type="journal article" date="2006" name="Mol. Syst. Biol.">
        <title>Highly accurate genome sequences of Escherichia coli K-12 strains MG1655 and W3110.</title>
        <authorList>
            <person name="Hayashi K."/>
            <person name="Morooka N."/>
            <person name="Yamamoto Y."/>
            <person name="Fujita K."/>
            <person name="Isono K."/>
            <person name="Choi S."/>
            <person name="Ohtsubo E."/>
            <person name="Baba T."/>
            <person name="Wanner B.L."/>
            <person name="Mori H."/>
            <person name="Horiuchi T."/>
        </authorList>
    </citation>
    <scope>NUCLEOTIDE SEQUENCE [LARGE SCALE GENOMIC DNA]</scope>
    <source>
        <strain>K12 / W3110 / ATCC 27325 / DSM 5911</strain>
    </source>
</reference>
<reference key="3">
    <citation type="journal article" date="2008" name="Mol. Microbiol.">
        <title>Small membrane proteins found by comparative genomics and ribosome binding site models.</title>
        <authorList>
            <person name="Hemm M.R."/>
            <person name="Paul B.J."/>
            <person name="Schneider T.D."/>
            <person name="Storz G."/>
            <person name="Rudd K.E."/>
        </authorList>
    </citation>
    <scope>IDENTIFICATION</scope>
    <scope>SUBCELLULAR LOCATION</scope>
    <scope>INDUCTION</scope>
    <source>
        <strain>K12 / MG1655 / ATCC 47076</strain>
    </source>
</reference>
<reference key="4">
    <citation type="journal article" date="2010" name="J. Bacteriol.">
        <title>Small stress response proteins in Escherichia coli: proteins missed by classical proteomic studies.</title>
        <authorList>
            <person name="Hemm M.R."/>
            <person name="Paul B.J."/>
            <person name="Miranda-Rios J."/>
            <person name="Zhang A."/>
            <person name="Soltanzad N."/>
            <person name="Storz G."/>
        </authorList>
    </citation>
    <scope>INDUCTION</scope>
    <source>
        <strain>K12 / MG1655 / ATCC 47076</strain>
    </source>
</reference>
<reference key="5">
    <citation type="journal article" date="2011" name="J. Biol. Chem.">
        <title>Membrane localization of small proteins in Escherichia coli.</title>
        <authorList>
            <person name="Fontaine F."/>
            <person name="Fuchs R.T."/>
            <person name="Storz G."/>
        </authorList>
    </citation>
    <scope>SUBCELLULAR LOCATION</scope>
    <scope>TOPOLOGY</scope>
    <source>
        <strain>K12 / MG1655 / ATCC 47076</strain>
    </source>
</reference>
<protein>
    <recommendedName>
        <fullName>Uncharacterized membrane protein YoaK</fullName>
    </recommendedName>
</protein>
<proteinExistence type="evidence at protein level"/>
<evidence type="ECO:0000255" key="1"/>
<evidence type="ECO:0000269" key="2">
    <source>
    </source>
</evidence>
<evidence type="ECO:0000269" key="3">
    <source>
    </source>
</evidence>
<evidence type="ECO:0000269" key="4">
    <source>
    </source>
</evidence>
<evidence type="ECO:0000305" key="5">
    <source>
    </source>
</evidence>
<evidence type="ECO:0000305" key="6">
    <source>
    </source>
</evidence>
<comment type="subcellular location">
    <subcellularLocation>
        <location evidence="5 6">Cell inner membrane</location>
        <topology evidence="2 4">Single-pass membrane protein</topology>
    </subcellularLocation>
    <text>May be able to insert into the membrane in both orientations. Relies on YidC for insertion.</text>
</comment>
<comment type="induction">
    <text evidence="2 3">Constitutively expressed, may be induced at pH 5.5, repressed by thiol oxidant diamide (at protein level).</text>
</comment>
<feature type="chain" id="PRO_0000381983" description="Uncharacterized membrane protein YoaK">
    <location>
        <begin position="1"/>
        <end position="32"/>
    </location>
</feature>
<feature type="transmembrane region" description="Helical" evidence="1">
    <location>
        <begin position="3"/>
        <end position="23"/>
    </location>
</feature>
<accession>C1P602</accession>
<organism>
    <name type="scientific">Escherichia coli (strain K12)</name>
    <dbReference type="NCBI Taxonomy" id="83333"/>
    <lineage>
        <taxon>Bacteria</taxon>
        <taxon>Pseudomonadati</taxon>
        <taxon>Pseudomonadota</taxon>
        <taxon>Gammaproteobacteria</taxon>
        <taxon>Enterobacterales</taxon>
        <taxon>Enterobacteriaceae</taxon>
        <taxon>Escherichia</taxon>
    </lineage>
</organism>
<keyword id="KW-0997">Cell inner membrane</keyword>
<keyword id="KW-1003">Cell membrane</keyword>
<keyword id="KW-0472">Membrane</keyword>
<keyword id="KW-1185">Reference proteome</keyword>
<keyword id="KW-0346">Stress response</keyword>
<keyword id="KW-0812">Transmembrane</keyword>
<keyword id="KW-1133">Transmembrane helix</keyword>
<dbReference type="EMBL" id="U00096">
    <property type="protein sequence ID" value="ACO59994.1"/>
    <property type="molecule type" value="Genomic_DNA"/>
</dbReference>
<dbReference type="EMBL" id="AP009048">
    <property type="status" value="NOT_ANNOTATED_CDS"/>
    <property type="molecule type" value="Genomic_DNA"/>
</dbReference>
<dbReference type="RefSeq" id="WP_001219350.1">
    <property type="nucleotide sequence ID" value="NZ_STEB01000009.1"/>
</dbReference>
<dbReference type="RefSeq" id="YP_002791242.1">
    <property type="nucleotide sequence ID" value="NC_000913.3"/>
</dbReference>
<dbReference type="SMR" id="C1P602"/>
<dbReference type="STRING" id="511145.b4676"/>
<dbReference type="PaxDb" id="511145-b4676"/>
<dbReference type="EnsemblBacteria" id="ACO59994">
    <property type="protein sequence ID" value="ACO59994"/>
    <property type="gene ID" value="b4676"/>
</dbReference>
<dbReference type="GeneID" id="7751647"/>
<dbReference type="KEGG" id="eco:b4676"/>
<dbReference type="KEGG" id="ecoc:C3026_10230"/>
<dbReference type="PATRIC" id="fig|511145.12.peg.1869"/>
<dbReference type="eggNOG" id="ENOG5033FA1">
    <property type="taxonomic scope" value="Bacteria"/>
</dbReference>
<dbReference type="InParanoid" id="C1P602"/>
<dbReference type="OrthoDB" id="6521812at2"/>
<dbReference type="BioCyc" id="EcoCyc:MONOMER0-2876"/>
<dbReference type="PRO" id="PR:C1P602"/>
<dbReference type="Proteomes" id="UP000000625">
    <property type="component" value="Chromosome"/>
</dbReference>
<dbReference type="GO" id="GO:0005886">
    <property type="term" value="C:plasma membrane"/>
    <property type="evidence" value="ECO:0000314"/>
    <property type="project" value="EcoCyc"/>
</dbReference>
<dbReference type="InterPro" id="IPR047839">
    <property type="entry name" value="YoaK-like"/>
</dbReference>
<dbReference type="NCBIfam" id="NF033821">
    <property type="entry name" value="YoaK"/>
    <property type="match status" value="1"/>
</dbReference>
<name>YOAK_ECOLI</name>
<gene>
    <name type="primary">yoaK</name>
    <name type="ordered locus">b4676</name>
    <name type="ordered locus">JW5292.1</name>
</gene>
<sequence length="32" mass="3458">MRIGIIFPVVIFITAVVFLAWFFIGGYAAPGA</sequence>